<reference key="1">
    <citation type="journal article" date="2005" name="J. Bacteriol.">
        <title>Insights into genome plasticity and pathogenicity of the plant pathogenic Bacterium Xanthomonas campestris pv. vesicatoria revealed by the complete genome sequence.</title>
        <authorList>
            <person name="Thieme F."/>
            <person name="Koebnik R."/>
            <person name="Bekel T."/>
            <person name="Berger C."/>
            <person name="Boch J."/>
            <person name="Buettner D."/>
            <person name="Caldana C."/>
            <person name="Gaigalat L."/>
            <person name="Goesmann A."/>
            <person name="Kay S."/>
            <person name="Kirchner O."/>
            <person name="Lanz C."/>
            <person name="Linke B."/>
            <person name="McHardy A.C."/>
            <person name="Meyer F."/>
            <person name="Mittenhuber G."/>
            <person name="Nies D.H."/>
            <person name="Niesbach-Kloesgen U."/>
            <person name="Patschkowski T."/>
            <person name="Rueckert C."/>
            <person name="Rupp O."/>
            <person name="Schneiker S."/>
            <person name="Schuster S.C."/>
            <person name="Vorhoelter F.J."/>
            <person name="Weber E."/>
            <person name="Puehler A."/>
            <person name="Bonas U."/>
            <person name="Bartels D."/>
            <person name="Kaiser O."/>
        </authorList>
    </citation>
    <scope>NUCLEOTIDE SEQUENCE [LARGE SCALE GENOMIC DNA]</scope>
    <source>
        <strain>85-10</strain>
    </source>
</reference>
<accession>Q3BWK4</accession>
<gene>
    <name type="ordered locus">XCV1128</name>
</gene>
<name>Y1128_XANE5</name>
<feature type="chain" id="PRO_1000003866" description="Nucleoid-associated protein XCV1128">
    <location>
        <begin position="1"/>
        <end position="106"/>
    </location>
</feature>
<feature type="region of interest" description="Disordered" evidence="2">
    <location>
        <begin position="81"/>
        <end position="106"/>
    </location>
</feature>
<keyword id="KW-0963">Cytoplasm</keyword>
<keyword id="KW-0238">DNA-binding</keyword>
<organism>
    <name type="scientific">Xanthomonas euvesicatoria pv. vesicatoria (strain 85-10)</name>
    <name type="common">Xanthomonas campestris pv. vesicatoria</name>
    <dbReference type="NCBI Taxonomy" id="316273"/>
    <lineage>
        <taxon>Bacteria</taxon>
        <taxon>Pseudomonadati</taxon>
        <taxon>Pseudomonadota</taxon>
        <taxon>Gammaproteobacteria</taxon>
        <taxon>Lysobacterales</taxon>
        <taxon>Lysobacteraceae</taxon>
        <taxon>Xanthomonas</taxon>
    </lineage>
</organism>
<dbReference type="EMBL" id="AM039952">
    <property type="protein sequence ID" value="CAJ22759.1"/>
    <property type="molecule type" value="Genomic_DNA"/>
</dbReference>
<dbReference type="RefSeq" id="WP_011346622.1">
    <property type="nucleotide sequence ID" value="NZ_CP017190.1"/>
</dbReference>
<dbReference type="SMR" id="Q3BWK4"/>
<dbReference type="STRING" id="456327.BJD11_17015"/>
<dbReference type="KEGG" id="xcv:XCV1128"/>
<dbReference type="eggNOG" id="COG0718">
    <property type="taxonomic scope" value="Bacteria"/>
</dbReference>
<dbReference type="HOGENOM" id="CLU_140930_0_0_6"/>
<dbReference type="Proteomes" id="UP000007069">
    <property type="component" value="Chromosome"/>
</dbReference>
<dbReference type="GO" id="GO:0043590">
    <property type="term" value="C:bacterial nucleoid"/>
    <property type="evidence" value="ECO:0007669"/>
    <property type="project" value="UniProtKB-UniRule"/>
</dbReference>
<dbReference type="GO" id="GO:0005829">
    <property type="term" value="C:cytosol"/>
    <property type="evidence" value="ECO:0007669"/>
    <property type="project" value="TreeGrafter"/>
</dbReference>
<dbReference type="GO" id="GO:0003677">
    <property type="term" value="F:DNA binding"/>
    <property type="evidence" value="ECO:0007669"/>
    <property type="project" value="UniProtKB-UniRule"/>
</dbReference>
<dbReference type="FunFam" id="3.30.1310.10:FF:000001">
    <property type="entry name" value="Nucleoid-associated protein YbaB"/>
    <property type="match status" value="1"/>
</dbReference>
<dbReference type="Gene3D" id="3.30.1310.10">
    <property type="entry name" value="Nucleoid-associated protein YbaB-like domain"/>
    <property type="match status" value="1"/>
</dbReference>
<dbReference type="HAMAP" id="MF_00274">
    <property type="entry name" value="DNA_YbaB_EbfC"/>
    <property type="match status" value="1"/>
</dbReference>
<dbReference type="InterPro" id="IPR036894">
    <property type="entry name" value="YbaB-like_sf"/>
</dbReference>
<dbReference type="InterPro" id="IPR004401">
    <property type="entry name" value="YbaB/EbfC"/>
</dbReference>
<dbReference type="NCBIfam" id="TIGR00103">
    <property type="entry name" value="DNA_YbaB_EbfC"/>
    <property type="match status" value="1"/>
</dbReference>
<dbReference type="PANTHER" id="PTHR33449">
    <property type="entry name" value="NUCLEOID-ASSOCIATED PROTEIN YBAB"/>
    <property type="match status" value="1"/>
</dbReference>
<dbReference type="PANTHER" id="PTHR33449:SF1">
    <property type="entry name" value="NUCLEOID-ASSOCIATED PROTEIN YBAB"/>
    <property type="match status" value="1"/>
</dbReference>
<dbReference type="Pfam" id="PF02575">
    <property type="entry name" value="YbaB_DNA_bd"/>
    <property type="match status" value="1"/>
</dbReference>
<dbReference type="PIRSF" id="PIRSF004555">
    <property type="entry name" value="UCP004555"/>
    <property type="match status" value="1"/>
</dbReference>
<dbReference type="SUPFAM" id="SSF82607">
    <property type="entry name" value="YbaB-like"/>
    <property type="match status" value="1"/>
</dbReference>
<comment type="function">
    <text evidence="1">Binds to DNA and alters its conformation. May be involved in regulation of gene expression, nucleoid organization and DNA protection.</text>
</comment>
<comment type="subunit">
    <text evidence="1">Homodimer.</text>
</comment>
<comment type="subcellular location">
    <subcellularLocation>
        <location evidence="1">Cytoplasm</location>
        <location evidence="1">Nucleoid</location>
    </subcellularLocation>
</comment>
<comment type="similarity">
    <text evidence="1">Belongs to the YbaB/EbfC family.</text>
</comment>
<sequence>MRGNIAQLMQQAQKMQENLQRAQEELAKLEVTGSAGGGMVSVTLTGAKECRKVRIDPSILSDQEMAEDLIAAAFNDASNKIDAESKDRMGSATAGMQLPPGMKLPF</sequence>
<evidence type="ECO:0000255" key="1">
    <source>
        <dbReference type="HAMAP-Rule" id="MF_00274"/>
    </source>
</evidence>
<evidence type="ECO:0000256" key="2">
    <source>
        <dbReference type="SAM" id="MobiDB-lite"/>
    </source>
</evidence>
<proteinExistence type="inferred from homology"/>
<protein>
    <recommendedName>
        <fullName evidence="1">Nucleoid-associated protein XCV1128</fullName>
    </recommendedName>
</protein>